<gene>
    <name type="primary">petA</name>
    <name type="ordered locus">AtCg00540</name>
</gene>
<reference key="1">
    <citation type="journal article" date="1999" name="DNA Res.">
        <title>Complete structure of the chloroplast genome of Arabidopsis thaliana.</title>
        <authorList>
            <person name="Sato S."/>
            <person name="Nakamura Y."/>
            <person name="Kaneko T."/>
            <person name="Asamizu E."/>
            <person name="Tabata S."/>
        </authorList>
    </citation>
    <scope>NUCLEOTIDE SEQUENCE [LARGE SCALE GENOMIC DNA]</scope>
    <source>
        <strain>cv. Columbia</strain>
    </source>
</reference>
<proteinExistence type="inferred from homology"/>
<comment type="function">
    <text evidence="1">Component of the cytochrome b6-f complex, which mediates electron transfer between photosystem II (PSII) and photosystem I (PSI), cyclic electron flow around PSI, and state transitions.</text>
</comment>
<comment type="cofactor">
    <cofactor evidence="1">
        <name>heme</name>
        <dbReference type="ChEBI" id="CHEBI:30413"/>
    </cofactor>
    <text evidence="1">Binds 1 heme group covalently.</text>
</comment>
<comment type="subunit">
    <text evidence="1">The 4 large subunits of the cytochrome b6-f complex are cytochrome b6, subunit IV (17 kDa polypeptide, petD), cytochrome f and the Rieske protein, while the 4 small subunits are PetG, PetL, PetM and PetN. The complex functions as a dimer (By similarity).</text>
</comment>
<comment type="subcellular location">
    <subcellularLocation>
        <location evidence="1">Plastid</location>
        <location evidence="1">Chloroplast thylakoid membrane</location>
        <topology evidence="1">Single-pass membrane protein</topology>
    </subcellularLocation>
</comment>
<comment type="similarity">
    <text evidence="3">Belongs to the cytochrome f family.</text>
</comment>
<name>CYF_ARATH</name>
<sequence length="320" mass="35357">MQTRNTFSWIREEITRSISVSLIIYIITWASISSAYPIFAQQNYENPREATGRIVCANCHLANKPVDIEVPQTVLPDTVFEAVVKIPYDMQLKQVLANGKKGALNVGAVLILPEGFELAPPDRISPEMKEKIGNLSFQNYRPNKKNILVIGPVPGQKYSEITFPILAPDPATNKDVHFLKYPIYVGGNRGRGQIYPDGSKSNNTVYNATAGGIISKILRKEKGGYEITIVDASNGREVIDIIPRGLELLVSEGESIKLDQPLTSNPNVGGFGQGDAEIVLQDPLRVQGLLFFLGSVVLAQIFLVLKKKQFEKVQLSEMNF</sequence>
<protein>
    <recommendedName>
        <fullName>Cytochrome f</fullName>
    </recommendedName>
</protein>
<keyword id="KW-0150">Chloroplast</keyword>
<keyword id="KW-0249">Electron transport</keyword>
<keyword id="KW-0349">Heme</keyword>
<keyword id="KW-0408">Iron</keyword>
<keyword id="KW-0472">Membrane</keyword>
<keyword id="KW-0479">Metal-binding</keyword>
<keyword id="KW-0602">Photosynthesis</keyword>
<keyword id="KW-0934">Plastid</keyword>
<keyword id="KW-1185">Reference proteome</keyword>
<keyword id="KW-0732">Signal</keyword>
<keyword id="KW-0793">Thylakoid</keyword>
<keyword id="KW-0812">Transmembrane</keyword>
<keyword id="KW-1133">Transmembrane helix</keyword>
<keyword id="KW-0813">Transport</keyword>
<organism>
    <name type="scientific">Arabidopsis thaliana</name>
    <name type="common">Mouse-ear cress</name>
    <dbReference type="NCBI Taxonomy" id="3702"/>
    <lineage>
        <taxon>Eukaryota</taxon>
        <taxon>Viridiplantae</taxon>
        <taxon>Streptophyta</taxon>
        <taxon>Embryophyta</taxon>
        <taxon>Tracheophyta</taxon>
        <taxon>Spermatophyta</taxon>
        <taxon>Magnoliopsida</taxon>
        <taxon>eudicotyledons</taxon>
        <taxon>Gunneridae</taxon>
        <taxon>Pentapetalae</taxon>
        <taxon>rosids</taxon>
        <taxon>malvids</taxon>
        <taxon>Brassicales</taxon>
        <taxon>Brassicaceae</taxon>
        <taxon>Camelineae</taxon>
        <taxon>Arabidopsis</taxon>
    </lineage>
</organism>
<dbReference type="EMBL" id="AP000423">
    <property type="protein sequence ID" value="BAA84398.1"/>
    <property type="molecule type" value="Genomic_DNA"/>
</dbReference>
<dbReference type="RefSeq" id="NP_051072.1">
    <property type="nucleotide sequence ID" value="NC_000932.1"/>
</dbReference>
<dbReference type="SMR" id="P56771"/>
<dbReference type="BioGRID" id="29952">
    <property type="interactions" value="1"/>
</dbReference>
<dbReference type="FunCoup" id="P56771">
    <property type="interactions" value="310"/>
</dbReference>
<dbReference type="STRING" id="3702.P56771"/>
<dbReference type="iPTMnet" id="P56771"/>
<dbReference type="PaxDb" id="3702-ATCG00540.1"/>
<dbReference type="ProteomicsDB" id="240407"/>
<dbReference type="EnsemblPlants" id="ATCG00540.1">
    <property type="protein sequence ID" value="ATCG00540.1"/>
    <property type="gene ID" value="ATCG00540"/>
</dbReference>
<dbReference type="GeneID" id="844748"/>
<dbReference type="Gramene" id="ATCG00540.1">
    <property type="protein sequence ID" value="ATCG00540.1"/>
    <property type="gene ID" value="ATCG00540"/>
</dbReference>
<dbReference type="KEGG" id="ath:ArthCp035"/>
<dbReference type="Araport" id="ATCG00540"/>
<dbReference type="TAIR" id="ATCG00540">
    <property type="gene designation" value="PETA"/>
</dbReference>
<dbReference type="eggNOG" id="ENOG502QPT8">
    <property type="taxonomic scope" value="Eukaryota"/>
</dbReference>
<dbReference type="HOGENOM" id="CLU_033498_0_0_1"/>
<dbReference type="InParanoid" id="P56771"/>
<dbReference type="OMA" id="PFWAQQN"/>
<dbReference type="CD-CODE" id="4299E36E">
    <property type="entry name" value="Nucleolus"/>
</dbReference>
<dbReference type="PRO" id="PR:P56771"/>
<dbReference type="Proteomes" id="UP000006548">
    <property type="component" value="Chloroplast Pltd"/>
</dbReference>
<dbReference type="ExpressionAtlas" id="P56771">
    <property type="expression patterns" value="baseline and differential"/>
</dbReference>
<dbReference type="GO" id="GO:0009507">
    <property type="term" value="C:chloroplast"/>
    <property type="evidence" value="ECO:0007005"/>
    <property type="project" value="TAIR"/>
</dbReference>
<dbReference type="GO" id="GO:0009534">
    <property type="term" value="C:chloroplast thylakoid"/>
    <property type="evidence" value="ECO:0007005"/>
    <property type="project" value="TAIR"/>
</dbReference>
<dbReference type="GO" id="GO:0009535">
    <property type="term" value="C:chloroplast thylakoid membrane"/>
    <property type="evidence" value="ECO:0007005"/>
    <property type="project" value="TAIR"/>
</dbReference>
<dbReference type="GO" id="GO:0009512">
    <property type="term" value="C:cytochrome b6f complex"/>
    <property type="evidence" value="ECO:0000304"/>
    <property type="project" value="TAIR"/>
</dbReference>
<dbReference type="GO" id="GO:0009536">
    <property type="term" value="C:plastid"/>
    <property type="evidence" value="ECO:0007005"/>
    <property type="project" value="TAIR"/>
</dbReference>
<dbReference type="GO" id="GO:0009579">
    <property type="term" value="C:thylakoid"/>
    <property type="evidence" value="ECO:0007005"/>
    <property type="project" value="TAIR"/>
</dbReference>
<dbReference type="GO" id="GO:0009055">
    <property type="term" value="F:electron transfer activity"/>
    <property type="evidence" value="ECO:0007669"/>
    <property type="project" value="UniProtKB-UniRule"/>
</dbReference>
<dbReference type="GO" id="GO:0020037">
    <property type="term" value="F:heme binding"/>
    <property type="evidence" value="ECO:0007669"/>
    <property type="project" value="InterPro"/>
</dbReference>
<dbReference type="GO" id="GO:0005506">
    <property type="term" value="F:iron ion binding"/>
    <property type="evidence" value="ECO:0007669"/>
    <property type="project" value="InterPro"/>
</dbReference>
<dbReference type="GO" id="GO:0003729">
    <property type="term" value="F:mRNA binding"/>
    <property type="evidence" value="ECO:0000314"/>
    <property type="project" value="TAIR"/>
</dbReference>
<dbReference type="GO" id="GO:0009767">
    <property type="term" value="P:photosynthetic electron transport chain"/>
    <property type="evidence" value="ECO:0000304"/>
    <property type="project" value="TAIR"/>
</dbReference>
<dbReference type="FunFam" id="1.20.5.700:FF:000001">
    <property type="entry name" value="Cytochrome f"/>
    <property type="match status" value="1"/>
</dbReference>
<dbReference type="FunFam" id="2.40.50.100:FF:000007">
    <property type="entry name" value="Cytochrome f"/>
    <property type="match status" value="1"/>
</dbReference>
<dbReference type="FunFam" id="2.60.40.830:FF:000001">
    <property type="entry name" value="Cytochrome f"/>
    <property type="match status" value="1"/>
</dbReference>
<dbReference type="Gene3D" id="2.40.50.100">
    <property type="match status" value="1"/>
</dbReference>
<dbReference type="Gene3D" id="2.60.40.830">
    <property type="entry name" value="Cytochrome f large domain"/>
    <property type="match status" value="1"/>
</dbReference>
<dbReference type="Gene3D" id="1.20.5.700">
    <property type="entry name" value="Single helix bin"/>
    <property type="match status" value="1"/>
</dbReference>
<dbReference type="HAMAP" id="MF_00610">
    <property type="entry name" value="Cytb6_f_cytF"/>
    <property type="match status" value="1"/>
</dbReference>
<dbReference type="InterPro" id="IPR024058">
    <property type="entry name" value="Cyt-f_TM"/>
</dbReference>
<dbReference type="InterPro" id="IPR002325">
    <property type="entry name" value="Cyt_f"/>
</dbReference>
<dbReference type="InterPro" id="IPR024094">
    <property type="entry name" value="Cyt_f_lg_dom"/>
</dbReference>
<dbReference type="InterPro" id="IPR036826">
    <property type="entry name" value="Cyt_f_lg_dom_sf"/>
</dbReference>
<dbReference type="InterPro" id="IPR011054">
    <property type="entry name" value="Rudment_hybrid_motif"/>
</dbReference>
<dbReference type="PANTHER" id="PTHR33288">
    <property type="match status" value="1"/>
</dbReference>
<dbReference type="PANTHER" id="PTHR33288:SF10">
    <property type="entry name" value="CYTOCHROME F"/>
    <property type="match status" value="1"/>
</dbReference>
<dbReference type="Pfam" id="PF01333">
    <property type="entry name" value="Apocytochr_F_C"/>
    <property type="match status" value="1"/>
</dbReference>
<dbReference type="Pfam" id="PF16639">
    <property type="entry name" value="Apocytochr_F_N"/>
    <property type="match status" value="1"/>
</dbReference>
<dbReference type="PRINTS" id="PR00610">
    <property type="entry name" value="CYTOCHROMEF"/>
</dbReference>
<dbReference type="SUPFAM" id="SSF103431">
    <property type="entry name" value="Cytochrome f subunit of the cytochrome b6f complex, transmembrane anchor"/>
    <property type="match status" value="1"/>
</dbReference>
<dbReference type="SUPFAM" id="SSF49441">
    <property type="entry name" value="Cytochrome f, large domain"/>
    <property type="match status" value="1"/>
</dbReference>
<dbReference type="SUPFAM" id="SSF51246">
    <property type="entry name" value="Rudiment single hybrid motif"/>
    <property type="match status" value="1"/>
</dbReference>
<dbReference type="PROSITE" id="PS51010">
    <property type="entry name" value="CYTF"/>
    <property type="match status" value="1"/>
</dbReference>
<feature type="signal peptide" evidence="1">
    <location>
        <begin position="1"/>
        <end position="35"/>
    </location>
</feature>
<feature type="chain" id="PRO_0000023804" description="Cytochrome f">
    <location>
        <begin position="36"/>
        <end position="320"/>
    </location>
</feature>
<feature type="transmembrane region" description="Helical" evidence="2">
    <location>
        <begin position="286"/>
        <end position="305"/>
    </location>
</feature>
<feature type="binding site" description="axial binding residue" evidence="1">
    <location>
        <position position="36"/>
    </location>
    <ligand>
        <name>heme</name>
        <dbReference type="ChEBI" id="CHEBI:30413"/>
    </ligand>
    <ligandPart>
        <name>Fe</name>
        <dbReference type="ChEBI" id="CHEBI:18248"/>
    </ligandPart>
</feature>
<feature type="binding site" description="covalent" evidence="1">
    <location>
        <position position="56"/>
    </location>
    <ligand>
        <name>heme</name>
        <dbReference type="ChEBI" id="CHEBI:30413"/>
    </ligand>
</feature>
<feature type="binding site" description="covalent" evidence="1">
    <location>
        <position position="59"/>
    </location>
    <ligand>
        <name>heme</name>
        <dbReference type="ChEBI" id="CHEBI:30413"/>
    </ligand>
</feature>
<feature type="binding site" description="axial binding residue" evidence="1">
    <location>
        <position position="60"/>
    </location>
    <ligand>
        <name>heme</name>
        <dbReference type="ChEBI" id="CHEBI:30413"/>
    </ligand>
    <ligandPart>
        <name>Fe</name>
        <dbReference type="ChEBI" id="CHEBI:18248"/>
    </ligandPart>
</feature>
<accession>P56771</accession>
<geneLocation type="chloroplast"/>
<evidence type="ECO:0000250" key="1"/>
<evidence type="ECO:0000255" key="2"/>
<evidence type="ECO:0000305" key="3"/>